<accession>A4JM56</accession>
<evidence type="ECO:0000250" key="1"/>
<evidence type="ECO:0000255" key="2">
    <source>
        <dbReference type="HAMAP-Rule" id="MF_00790"/>
    </source>
</evidence>
<protein>
    <recommendedName>
        <fullName evidence="2">Lipase chaperone</fullName>
    </recommendedName>
    <alternativeName>
        <fullName evidence="2">Lipase activator protein</fullName>
    </alternativeName>
    <alternativeName>
        <fullName evidence="2">Lipase foldase</fullName>
    </alternativeName>
    <alternativeName>
        <fullName evidence="2">Lipase helper protein</fullName>
    </alternativeName>
    <alternativeName>
        <fullName evidence="2">Lipase modulator</fullName>
    </alternativeName>
</protein>
<proteinExistence type="inferred from homology"/>
<comment type="function">
    <text evidence="2">May be involved in the folding of the extracellular lipase during its passage through the periplasm.</text>
</comment>
<comment type="subcellular location">
    <subcellularLocation>
        <location evidence="2">Cell inner membrane</location>
        <topology evidence="2">Single-pass membrane protein</topology>
        <orientation evidence="1">Periplasmic side</orientation>
    </subcellularLocation>
</comment>
<comment type="similarity">
    <text evidence="2">Belongs to the lipase chaperone family.</text>
</comment>
<sequence length="344" mass="36567">MSAQQTRAPLLRRIAPYGAAGLAAIVGVAIWSGTGSQSGADASRTPANAVAADGASAAVRQAALPASAALPAPLVGSSAPRLPLDSGGHLAKVRAVRDFFDYCLTARSELTAAALDALVAREIAAQLDATPAQPEALDVWRRYRAYLDALEKLPDGGAVDKIDPEALQRALDQRASIAHRTLGDWSQPFFGAEQSQQRYDLARLRIVQDRTLTDAQKAERLAALDQQMPADERAARAPAERQRAALDQIAQLQKSGATPDAVRAQLTQSLGADVAARVVQMQQDDASWQSRYADYAAQRAQIDAAGLSQQDRDAQIAALRQRIFTKPGEAVRAAAFDRSAAGTR</sequence>
<name>LIFO_BURVG</name>
<dbReference type="EMBL" id="CP000615">
    <property type="protein sequence ID" value="ABO57359.1"/>
    <property type="molecule type" value="Genomic_DNA"/>
</dbReference>
<dbReference type="SMR" id="A4JM56"/>
<dbReference type="KEGG" id="bvi:Bcep1808_4393"/>
<dbReference type="eggNOG" id="COG5380">
    <property type="taxonomic scope" value="Bacteria"/>
</dbReference>
<dbReference type="HOGENOM" id="CLU_064928_1_0_4"/>
<dbReference type="Proteomes" id="UP000002287">
    <property type="component" value="Chromosome 2"/>
</dbReference>
<dbReference type="GO" id="GO:0005886">
    <property type="term" value="C:plasma membrane"/>
    <property type="evidence" value="ECO:0007669"/>
    <property type="project" value="UniProtKB-SubCell"/>
</dbReference>
<dbReference type="GO" id="GO:0051082">
    <property type="term" value="F:unfolded protein binding"/>
    <property type="evidence" value="ECO:0007669"/>
    <property type="project" value="UniProtKB-UniRule"/>
</dbReference>
<dbReference type="GO" id="GO:0016042">
    <property type="term" value="P:lipid catabolic process"/>
    <property type="evidence" value="ECO:0007669"/>
    <property type="project" value="UniProtKB-UniRule"/>
</dbReference>
<dbReference type="GO" id="GO:0006457">
    <property type="term" value="P:protein folding"/>
    <property type="evidence" value="ECO:0007669"/>
    <property type="project" value="UniProtKB-UniRule"/>
</dbReference>
<dbReference type="HAMAP" id="MF_00790">
    <property type="entry name" value="Lipase_chap"/>
    <property type="match status" value="1"/>
</dbReference>
<dbReference type="InterPro" id="IPR004961">
    <property type="entry name" value="Lipase_chaperone"/>
</dbReference>
<dbReference type="NCBIfam" id="NF002333">
    <property type="entry name" value="PRK01294.1-1"/>
    <property type="match status" value="1"/>
</dbReference>
<dbReference type="Pfam" id="PF03280">
    <property type="entry name" value="Lipase_chap"/>
    <property type="match status" value="1"/>
</dbReference>
<dbReference type="SUPFAM" id="SSF158855">
    <property type="entry name" value="Lipase chaperone-like"/>
    <property type="match status" value="1"/>
</dbReference>
<feature type="chain" id="PRO_1000046915" description="Lipase chaperone">
    <location>
        <begin position="1"/>
        <end position="344"/>
    </location>
</feature>
<feature type="transmembrane region" description="Helical" evidence="2">
    <location>
        <begin position="13"/>
        <end position="35"/>
    </location>
</feature>
<gene>
    <name evidence="2" type="primary">lifO</name>
    <name type="ordered locus">Bcep1808_4393</name>
</gene>
<keyword id="KW-0997">Cell inner membrane</keyword>
<keyword id="KW-1003">Cell membrane</keyword>
<keyword id="KW-0143">Chaperone</keyword>
<keyword id="KW-0442">Lipid degradation</keyword>
<keyword id="KW-0443">Lipid metabolism</keyword>
<keyword id="KW-0472">Membrane</keyword>
<keyword id="KW-0812">Transmembrane</keyword>
<keyword id="KW-1133">Transmembrane helix</keyword>
<reference key="1">
    <citation type="submission" date="2007-03" db="EMBL/GenBank/DDBJ databases">
        <title>Complete sequence of chromosome 2 of Burkholderia vietnamiensis G4.</title>
        <authorList>
            <consortium name="US DOE Joint Genome Institute"/>
            <person name="Copeland A."/>
            <person name="Lucas S."/>
            <person name="Lapidus A."/>
            <person name="Barry K."/>
            <person name="Detter J.C."/>
            <person name="Glavina del Rio T."/>
            <person name="Hammon N."/>
            <person name="Israni S."/>
            <person name="Dalin E."/>
            <person name="Tice H."/>
            <person name="Pitluck S."/>
            <person name="Chain P."/>
            <person name="Malfatti S."/>
            <person name="Shin M."/>
            <person name="Vergez L."/>
            <person name="Schmutz J."/>
            <person name="Larimer F."/>
            <person name="Land M."/>
            <person name="Hauser L."/>
            <person name="Kyrpides N."/>
            <person name="Tiedje J."/>
            <person name="Richardson P."/>
        </authorList>
    </citation>
    <scope>NUCLEOTIDE SEQUENCE [LARGE SCALE GENOMIC DNA]</scope>
    <source>
        <strain>G4 / LMG 22486</strain>
    </source>
</reference>
<organism>
    <name type="scientific">Burkholderia vietnamiensis (strain G4 / LMG 22486)</name>
    <name type="common">Burkholderia cepacia (strain R1808)</name>
    <dbReference type="NCBI Taxonomy" id="269482"/>
    <lineage>
        <taxon>Bacteria</taxon>
        <taxon>Pseudomonadati</taxon>
        <taxon>Pseudomonadota</taxon>
        <taxon>Betaproteobacteria</taxon>
        <taxon>Burkholderiales</taxon>
        <taxon>Burkholderiaceae</taxon>
        <taxon>Burkholderia</taxon>
        <taxon>Burkholderia cepacia complex</taxon>
    </lineage>
</organism>